<name>U79_HHV7J</name>
<sequence length="233" mass="27276">MIAEDREYGTFESVTQAYQQIISHTLQLRRYEFETGCMIMFSANSGKCEMLSNGWISMISWTSETDTAGSLTLDICTEGGQCKTYSARGHILCSKNITSISQKNEGKEKVLTICHDNGKLHLTYITVLKSGLDCDIKDQKLEKLFEKEHAERKKQDDDYKKKALKQKDKRRSEQKILEDCDKKDEKKRMDDTEKRKLQEDRRNEKQDLKKRVDDTEKRKLEDDRRNEKQDLEG</sequence>
<dbReference type="EMBL" id="U43400">
    <property type="protein sequence ID" value="AAC54740.1"/>
    <property type="molecule type" value="Genomic_DNA"/>
</dbReference>
<dbReference type="PIR" id="T41980">
    <property type="entry name" value="T41980"/>
</dbReference>
<dbReference type="SMR" id="P52531"/>
<dbReference type="Proteomes" id="UP000009246">
    <property type="component" value="Segment"/>
</dbReference>
<dbReference type="GO" id="GO:0042025">
    <property type="term" value="C:host cell nucleus"/>
    <property type="evidence" value="ECO:0007669"/>
    <property type="project" value="UniProtKB-SubCell"/>
</dbReference>
<dbReference type="InterPro" id="IPR004138">
    <property type="entry name" value="U79_P34"/>
</dbReference>
<dbReference type="Pfam" id="PF03064">
    <property type="entry name" value="U79_P34"/>
    <property type="match status" value="1"/>
</dbReference>
<protein>
    <recommendedName>
        <fullName>Protein U79</fullName>
    </recommendedName>
</protein>
<feature type="chain" id="PRO_0000116327" description="Protein U79">
    <location>
        <begin position="1"/>
        <end position="233"/>
    </location>
</feature>
<feature type="region of interest" description="Disordered" evidence="2">
    <location>
        <begin position="155"/>
        <end position="233"/>
    </location>
</feature>
<feature type="compositionally biased region" description="Basic and acidic residues" evidence="2">
    <location>
        <begin position="170"/>
        <end position="233"/>
    </location>
</feature>
<comment type="function">
    <text evidence="3">May be involved in DNA replication.</text>
</comment>
<comment type="subcellular location">
    <subcellularLocation>
        <location evidence="1">Host nucleus</location>
    </subcellularLocation>
</comment>
<comment type="similarity">
    <text evidence="3">Belongs to the herpesviridae U79/UL112 family.</text>
</comment>
<gene>
    <name type="primary">U79</name>
</gene>
<keyword id="KW-1048">Host nucleus</keyword>
<keyword id="KW-1185">Reference proteome</keyword>
<accession>P52531</accession>
<organism>
    <name type="scientific">Human herpesvirus 7 (strain JI)</name>
    <name type="common">HHV-7</name>
    <name type="synonym">Human T lymphotropic virus</name>
    <dbReference type="NCBI Taxonomy" id="57278"/>
    <lineage>
        <taxon>Viruses</taxon>
        <taxon>Duplodnaviria</taxon>
        <taxon>Heunggongvirae</taxon>
        <taxon>Peploviricota</taxon>
        <taxon>Herviviricetes</taxon>
        <taxon>Herpesvirales</taxon>
        <taxon>Orthoherpesviridae</taxon>
        <taxon>Betaherpesvirinae</taxon>
        <taxon>Roseolovirus</taxon>
        <taxon>Roseolovirus humanbeta7</taxon>
        <taxon>Human betaherpesvirus 7</taxon>
    </lineage>
</organism>
<reference key="1">
    <citation type="journal article" date="1996" name="J. Virol.">
        <title>Determination and analysis of the complete nucleotide sequence of human herpesvirus.</title>
        <authorList>
            <person name="Nicholas J."/>
        </authorList>
    </citation>
    <scope>NUCLEOTIDE SEQUENCE [LARGE SCALE GENOMIC DNA]</scope>
</reference>
<organismHost>
    <name type="scientific">Homo sapiens</name>
    <name type="common">Human</name>
    <dbReference type="NCBI Taxonomy" id="9606"/>
</organismHost>
<evidence type="ECO:0000250" key="1"/>
<evidence type="ECO:0000256" key="2">
    <source>
        <dbReference type="SAM" id="MobiDB-lite"/>
    </source>
</evidence>
<evidence type="ECO:0000305" key="3"/>
<proteinExistence type="inferred from homology"/>